<proteinExistence type="predicted"/>
<name>Y1306_METJA</name>
<reference key="1">
    <citation type="journal article" date="1996" name="Science">
        <title>Complete genome sequence of the methanogenic archaeon, Methanococcus jannaschii.</title>
        <authorList>
            <person name="Bult C.J."/>
            <person name="White O."/>
            <person name="Olsen G.J."/>
            <person name="Zhou L."/>
            <person name="Fleischmann R.D."/>
            <person name="Sutton G.G."/>
            <person name="Blake J.A."/>
            <person name="FitzGerald L.M."/>
            <person name="Clayton R.A."/>
            <person name="Gocayne J.D."/>
            <person name="Kerlavage A.R."/>
            <person name="Dougherty B.A."/>
            <person name="Tomb J.-F."/>
            <person name="Adams M.D."/>
            <person name="Reich C.I."/>
            <person name="Overbeek R."/>
            <person name="Kirkness E.F."/>
            <person name="Weinstock K.G."/>
            <person name="Merrick J.M."/>
            <person name="Glodek A."/>
            <person name="Scott J.L."/>
            <person name="Geoghagen N.S.M."/>
            <person name="Weidman J.F."/>
            <person name="Fuhrmann J.L."/>
            <person name="Nguyen D."/>
            <person name="Utterback T.R."/>
            <person name="Kelley J.M."/>
            <person name="Peterson J.D."/>
            <person name="Sadow P.W."/>
            <person name="Hanna M.C."/>
            <person name="Cotton M.D."/>
            <person name="Roberts K.M."/>
            <person name="Hurst M.A."/>
            <person name="Kaine B.P."/>
            <person name="Borodovsky M."/>
            <person name="Klenk H.-P."/>
            <person name="Fraser C.M."/>
            <person name="Smith H.O."/>
            <person name="Woese C.R."/>
            <person name="Venter J.C."/>
        </authorList>
    </citation>
    <scope>NUCLEOTIDE SEQUENCE [LARGE SCALE GENOMIC DNA]</scope>
    <source>
        <strain>ATCC 43067 / DSM 2661 / JAL-1 / JCM 10045 / NBRC 100440</strain>
    </source>
</reference>
<dbReference type="EMBL" id="L77117">
    <property type="protein sequence ID" value="AAB99314.1"/>
    <property type="molecule type" value="Genomic_DNA"/>
</dbReference>
<dbReference type="PIR" id="A64463">
    <property type="entry name" value="A64463"/>
</dbReference>
<dbReference type="RefSeq" id="WP_010870823.1">
    <property type="nucleotide sequence ID" value="NC_000909.1"/>
</dbReference>
<dbReference type="FunCoup" id="Q58702">
    <property type="interactions" value="4"/>
</dbReference>
<dbReference type="STRING" id="243232.MJ_1306"/>
<dbReference type="PaxDb" id="243232-MJ_1306"/>
<dbReference type="DNASU" id="1452208"/>
<dbReference type="EnsemblBacteria" id="AAB99314">
    <property type="protein sequence ID" value="AAB99314"/>
    <property type="gene ID" value="MJ_1306"/>
</dbReference>
<dbReference type="GeneID" id="1452208"/>
<dbReference type="KEGG" id="mja:MJ_1306"/>
<dbReference type="eggNOG" id="arCOG06490">
    <property type="taxonomic scope" value="Archaea"/>
</dbReference>
<dbReference type="HOGENOM" id="CLU_198706_0_0_2"/>
<dbReference type="InParanoid" id="Q58702"/>
<dbReference type="OrthoDB" id="82319at2157"/>
<dbReference type="Proteomes" id="UP000000805">
    <property type="component" value="Chromosome"/>
</dbReference>
<dbReference type="GO" id="GO:0005886">
    <property type="term" value="C:plasma membrane"/>
    <property type="evidence" value="ECO:0007669"/>
    <property type="project" value="UniProtKB-SubCell"/>
</dbReference>
<gene>
    <name type="ordered locus">MJ1306</name>
</gene>
<sequence>MLDAILSNYLYYPSILAFLFGVLMGAKYRHKIGNIFGYLILTVVIAYFLKAFPYYDLLPLSCSYLSAVIGIIIGNRLFGGKMI</sequence>
<keyword id="KW-1003">Cell membrane</keyword>
<keyword id="KW-0472">Membrane</keyword>
<keyword id="KW-1185">Reference proteome</keyword>
<keyword id="KW-0812">Transmembrane</keyword>
<keyword id="KW-1133">Transmembrane helix</keyword>
<accession>Q58702</accession>
<comment type="subcellular location">
    <subcellularLocation>
        <location evidence="2">Cell membrane</location>
        <topology evidence="2">Multi-pass membrane protein</topology>
    </subcellularLocation>
</comment>
<feature type="chain" id="PRO_0000107264" description="Uncharacterized protein MJ1306">
    <location>
        <begin position="1"/>
        <end position="83"/>
    </location>
</feature>
<feature type="transmembrane region" description="Helical" evidence="1">
    <location>
        <begin position="4"/>
        <end position="24"/>
    </location>
</feature>
<feature type="transmembrane region" description="Helical" evidence="1">
    <location>
        <begin position="32"/>
        <end position="52"/>
    </location>
</feature>
<feature type="transmembrane region" description="Helical" evidence="1">
    <location>
        <begin position="54"/>
        <end position="74"/>
    </location>
</feature>
<evidence type="ECO:0000255" key="1"/>
<evidence type="ECO:0000305" key="2"/>
<organism>
    <name type="scientific">Methanocaldococcus jannaschii (strain ATCC 43067 / DSM 2661 / JAL-1 / JCM 10045 / NBRC 100440)</name>
    <name type="common">Methanococcus jannaschii</name>
    <dbReference type="NCBI Taxonomy" id="243232"/>
    <lineage>
        <taxon>Archaea</taxon>
        <taxon>Methanobacteriati</taxon>
        <taxon>Methanobacteriota</taxon>
        <taxon>Methanomada group</taxon>
        <taxon>Methanococci</taxon>
        <taxon>Methanococcales</taxon>
        <taxon>Methanocaldococcaceae</taxon>
        <taxon>Methanocaldococcus</taxon>
    </lineage>
</organism>
<protein>
    <recommendedName>
        <fullName>Uncharacterized protein MJ1306</fullName>
    </recommendedName>
</protein>